<keyword id="KW-0963">Cytoplasm</keyword>
<keyword id="KW-0408">Iron</keyword>
<keyword id="KW-0411">Iron-sulfur</keyword>
<keyword id="KW-0479">Metal-binding</keyword>
<keyword id="KW-1185">Reference proteome</keyword>
<keyword id="KW-0949">S-adenosyl-L-methionine</keyword>
<keyword id="KW-0808">Transferase</keyword>
<gene>
    <name type="primary">DPH1</name>
    <name type="ordered locus">YALI0F22055g</name>
</gene>
<comment type="function">
    <text evidence="2">Catalyzes the first step of diphthamide biosynthesis, a post-translational modification of histidine which occurs in elongation factor 2. DPH1 and DPH2 transfer a 3-amino-3-carboxypropyl (ACP) group from S-adenosyl-L-methionine (SAM) to a histidine residue, the reaction is assisted by a reduction system comprising DPH3 and a NADH-dependent reductase, predominantly CBR1.</text>
</comment>
<comment type="catalytic activity">
    <reaction evidence="2">
        <text>L-histidyl-[translation elongation factor 2] + S-adenosyl-L-methionine = 2-[(3S)-amino-3-carboxypropyl]-L-histidyl-[translation elongation factor 2] + S-methyl-5'-thioadenosine + H(+)</text>
        <dbReference type="Rhea" id="RHEA:36783"/>
        <dbReference type="Rhea" id="RHEA-COMP:9748"/>
        <dbReference type="Rhea" id="RHEA-COMP:9749"/>
        <dbReference type="ChEBI" id="CHEBI:15378"/>
        <dbReference type="ChEBI" id="CHEBI:17509"/>
        <dbReference type="ChEBI" id="CHEBI:29979"/>
        <dbReference type="ChEBI" id="CHEBI:59789"/>
        <dbReference type="ChEBI" id="CHEBI:73995"/>
        <dbReference type="EC" id="2.5.1.108"/>
    </reaction>
</comment>
<comment type="cofactor">
    <cofactor evidence="2">
        <name>[4Fe-4S] cluster</name>
        <dbReference type="ChEBI" id="CHEBI:49883"/>
    </cofactor>
    <text evidence="2">Binds 1 [4Fe-4S] cluster per subunit. The cluster is coordinated with 3 cysteines and an exchangeable S-adenosyl-L-methionine.</text>
</comment>
<comment type="pathway">
    <text>Protein modification; peptidyl-diphthamide biosynthesis.</text>
</comment>
<comment type="subunit">
    <text evidence="2">Component of the 2-(3-amino-3-carboxypropyl)histidine synthase complex composed of DPH1, DPH2, DPH3 and a NADH-dependent reductase, predominantly CBR1.</text>
</comment>
<comment type="subcellular location">
    <subcellularLocation>
        <location evidence="2">Cytoplasm</location>
    </subcellularLocation>
</comment>
<comment type="similarity">
    <text evidence="4">Belongs to the DPH1/DPH2 family. DPH1 subfamily.</text>
</comment>
<dbReference type="EC" id="2.5.1.108" evidence="2"/>
<dbReference type="EMBL" id="CR382132">
    <property type="protein sequence ID" value="CAG78545.1"/>
    <property type="molecule type" value="Genomic_DNA"/>
</dbReference>
<dbReference type="RefSeq" id="XP_505734.1">
    <property type="nucleotide sequence ID" value="XM_505734.1"/>
</dbReference>
<dbReference type="SMR" id="Q6C0S8"/>
<dbReference type="FunCoup" id="Q6C0S8">
    <property type="interactions" value="639"/>
</dbReference>
<dbReference type="STRING" id="284591.Q6C0S8"/>
<dbReference type="EnsemblFungi" id="CAG78545">
    <property type="protein sequence ID" value="CAG78545"/>
    <property type="gene ID" value="YALI0_F22055g"/>
</dbReference>
<dbReference type="KEGG" id="yli:2908829"/>
<dbReference type="VEuPathDB" id="FungiDB:YALI0_F22055g"/>
<dbReference type="HOGENOM" id="CLU_037146_1_1_1"/>
<dbReference type="InParanoid" id="Q6C0S8"/>
<dbReference type="OMA" id="PGQVLGC"/>
<dbReference type="OrthoDB" id="105184at4891"/>
<dbReference type="UniPathway" id="UPA00559"/>
<dbReference type="Proteomes" id="UP000001300">
    <property type="component" value="Chromosome F"/>
</dbReference>
<dbReference type="GO" id="GO:0120513">
    <property type="term" value="C:2-(3-amino-3-carboxypropyl)histidine synthase complex"/>
    <property type="evidence" value="ECO:0000250"/>
    <property type="project" value="UniProtKB"/>
</dbReference>
<dbReference type="GO" id="GO:0005737">
    <property type="term" value="C:cytoplasm"/>
    <property type="evidence" value="ECO:0007669"/>
    <property type="project" value="UniProtKB-SubCell"/>
</dbReference>
<dbReference type="GO" id="GO:0090560">
    <property type="term" value="F:2-(3-amino-3-carboxypropyl)histidine synthase activity"/>
    <property type="evidence" value="ECO:0007669"/>
    <property type="project" value="UniProtKB-EC"/>
</dbReference>
<dbReference type="GO" id="GO:0051539">
    <property type="term" value="F:4 iron, 4 sulfur cluster binding"/>
    <property type="evidence" value="ECO:0000250"/>
    <property type="project" value="UniProtKB"/>
</dbReference>
<dbReference type="GO" id="GO:0046872">
    <property type="term" value="F:metal ion binding"/>
    <property type="evidence" value="ECO:0007669"/>
    <property type="project" value="UniProtKB-KW"/>
</dbReference>
<dbReference type="GO" id="GO:0017183">
    <property type="term" value="P:protein histidyl modification to diphthamide"/>
    <property type="evidence" value="ECO:0000250"/>
    <property type="project" value="UniProtKB"/>
</dbReference>
<dbReference type="FunFam" id="3.40.50.11840:FF:000001">
    <property type="entry name" value="2-(3-amino-3-carboxypropyl)histidine synthase subunit 1"/>
    <property type="match status" value="1"/>
</dbReference>
<dbReference type="FunFam" id="3.40.50.11850:FF:000001">
    <property type="entry name" value="2-(3-amino-3-carboxypropyl)histidine synthase subunit 1"/>
    <property type="match status" value="1"/>
</dbReference>
<dbReference type="FunFam" id="3.40.50.11860:FF:000002">
    <property type="entry name" value="2-(3-amino-3-carboxypropyl)histidine synthase subunit 1"/>
    <property type="match status" value="1"/>
</dbReference>
<dbReference type="Gene3D" id="3.40.50.11840">
    <property type="entry name" value="Diphthamide synthesis DPH1/DPH2 domain 1"/>
    <property type="match status" value="1"/>
</dbReference>
<dbReference type="Gene3D" id="3.40.50.11850">
    <property type="entry name" value="Diphthamide synthesis DPH1/DPH2 domain 2"/>
    <property type="match status" value="1"/>
</dbReference>
<dbReference type="Gene3D" id="3.40.50.11860">
    <property type="entry name" value="Diphthamide synthesis DPH1/DPH2 domain 3"/>
    <property type="match status" value="1"/>
</dbReference>
<dbReference type="InterPro" id="IPR016435">
    <property type="entry name" value="DPH1/DPH2"/>
</dbReference>
<dbReference type="InterPro" id="IPR042263">
    <property type="entry name" value="DPH1/DPH2_1"/>
</dbReference>
<dbReference type="InterPro" id="IPR042264">
    <property type="entry name" value="DPH1/DPH2_2"/>
</dbReference>
<dbReference type="InterPro" id="IPR042265">
    <property type="entry name" value="DPH1/DPH2_3"/>
</dbReference>
<dbReference type="InterPro" id="IPR035435">
    <property type="entry name" value="DPH1/DPH2_euk_archaea"/>
</dbReference>
<dbReference type="NCBIfam" id="TIGR00322">
    <property type="entry name" value="diphth2_R"/>
    <property type="match status" value="1"/>
</dbReference>
<dbReference type="PANTHER" id="PTHR10762:SF1">
    <property type="entry name" value="2-(3-AMINO-3-CARBOXYPROPYL)HISTIDINE SYNTHASE SUBUNIT 1"/>
    <property type="match status" value="1"/>
</dbReference>
<dbReference type="PANTHER" id="PTHR10762">
    <property type="entry name" value="DIPHTHAMIDE BIOSYNTHESIS PROTEIN"/>
    <property type="match status" value="1"/>
</dbReference>
<dbReference type="Pfam" id="PF01866">
    <property type="entry name" value="Diphthamide_syn"/>
    <property type="match status" value="1"/>
</dbReference>
<dbReference type="PIRSF" id="PIRSF004967">
    <property type="entry name" value="DPH1"/>
    <property type="match status" value="1"/>
</dbReference>
<dbReference type="SFLD" id="SFLDG01121">
    <property type="entry name" value="Diphthamide_biosynthesis"/>
    <property type="match status" value="1"/>
</dbReference>
<dbReference type="SFLD" id="SFLDS00032">
    <property type="entry name" value="Radical_SAM_3-amino-3-carboxyp"/>
    <property type="match status" value="1"/>
</dbReference>
<sequence>MSCSASGECKSTTATPVAPCDPDTCKKSTSTQPRKRFVGRANGSGPSASTSLVKNTTRRPRIINQIPDEILNDEELNEVIATTLPKNYNFEIHKSIWHIRKNNCKKIALQMPEGLLIYACIISDIIEQFCGPDISTVVMGDVTYGACCVDDFSAIALGCDFLIHYAHSCLVPIDSIKIKVLYVFVTIEIDTDHVVKSFKKNFETGTRMAMVGTIQFNPTIHTLKDRLLNEAGIVCTAPQIMPLSKGEVLGCTSANMSTEDYDMIMYIGDGRFHLESAMIHNPDIPAYRYDPYSRKLTREYFDQVEMVSVRKRAIQTAKNAKTIGLILGTLGRQGNTATLDMLQEKLNSKGYETHIVLLSEIFPAKLALFDGVDAWVQVACPRLSIDWGYAFPKPLLTPYEAMVMMDEDTLEGNDYPMDYYGKEGYGRGKQPRAKKEIAI</sequence>
<protein>
    <recommendedName>
        <fullName evidence="4">2-(3-amino-3-carboxypropyl)histidine synthase subunit 1</fullName>
        <ecNumber evidence="2">2.5.1.108</ecNumber>
    </recommendedName>
    <alternativeName>
        <fullName>Diphthamide biosynthesis protein 1</fullName>
    </alternativeName>
    <alternativeName>
        <fullName evidence="4">Diphtheria toxin resistance protein 1</fullName>
    </alternativeName>
    <alternativeName>
        <fullName evidence="4">S-adenosyl-L-methionine:L-histidine 3-amino-3-carboxypropyltransferase 1</fullName>
    </alternativeName>
</protein>
<organism>
    <name type="scientific">Yarrowia lipolytica (strain CLIB 122 / E 150)</name>
    <name type="common">Yeast</name>
    <name type="synonym">Candida lipolytica</name>
    <dbReference type="NCBI Taxonomy" id="284591"/>
    <lineage>
        <taxon>Eukaryota</taxon>
        <taxon>Fungi</taxon>
        <taxon>Dikarya</taxon>
        <taxon>Ascomycota</taxon>
        <taxon>Saccharomycotina</taxon>
        <taxon>Dipodascomycetes</taxon>
        <taxon>Dipodascales</taxon>
        <taxon>Dipodascales incertae sedis</taxon>
        <taxon>Yarrowia</taxon>
    </lineage>
</organism>
<accession>Q6C0S8</accession>
<evidence type="ECO:0000250" key="1">
    <source>
        <dbReference type="UniProtKB" id="O58832"/>
    </source>
</evidence>
<evidence type="ECO:0000250" key="2">
    <source>
        <dbReference type="UniProtKB" id="P40487"/>
    </source>
</evidence>
<evidence type="ECO:0000256" key="3">
    <source>
        <dbReference type="SAM" id="MobiDB-lite"/>
    </source>
</evidence>
<evidence type="ECO:0000305" key="4"/>
<name>DPH1_YARLI</name>
<reference key="1">
    <citation type="journal article" date="2004" name="Nature">
        <title>Genome evolution in yeasts.</title>
        <authorList>
            <person name="Dujon B."/>
            <person name="Sherman D."/>
            <person name="Fischer G."/>
            <person name="Durrens P."/>
            <person name="Casaregola S."/>
            <person name="Lafontaine I."/>
            <person name="de Montigny J."/>
            <person name="Marck C."/>
            <person name="Neuveglise C."/>
            <person name="Talla E."/>
            <person name="Goffard N."/>
            <person name="Frangeul L."/>
            <person name="Aigle M."/>
            <person name="Anthouard V."/>
            <person name="Babour A."/>
            <person name="Barbe V."/>
            <person name="Barnay S."/>
            <person name="Blanchin S."/>
            <person name="Beckerich J.-M."/>
            <person name="Beyne E."/>
            <person name="Bleykasten C."/>
            <person name="Boisrame A."/>
            <person name="Boyer J."/>
            <person name="Cattolico L."/>
            <person name="Confanioleri F."/>
            <person name="de Daruvar A."/>
            <person name="Despons L."/>
            <person name="Fabre E."/>
            <person name="Fairhead C."/>
            <person name="Ferry-Dumazet H."/>
            <person name="Groppi A."/>
            <person name="Hantraye F."/>
            <person name="Hennequin C."/>
            <person name="Jauniaux N."/>
            <person name="Joyet P."/>
            <person name="Kachouri R."/>
            <person name="Kerrest A."/>
            <person name="Koszul R."/>
            <person name="Lemaire M."/>
            <person name="Lesur I."/>
            <person name="Ma L."/>
            <person name="Muller H."/>
            <person name="Nicaud J.-M."/>
            <person name="Nikolski M."/>
            <person name="Oztas S."/>
            <person name="Ozier-Kalogeropoulos O."/>
            <person name="Pellenz S."/>
            <person name="Potier S."/>
            <person name="Richard G.-F."/>
            <person name="Straub M.-L."/>
            <person name="Suleau A."/>
            <person name="Swennen D."/>
            <person name="Tekaia F."/>
            <person name="Wesolowski-Louvel M."/>
            <person name="Westhof E."/>
            <person name="Wirth B."/>
            <person name="Zeniou-Meyer M."/>
            <person name="Zivanovic Y."/>
            <person name="Bolotin-Fukuhara M."/>
            <person name="Thierry A."/>
            <person name="Bouchier C."/>
            <person name="Caudron B."/>
            <person name="Scarpelli C."/>
            <person name="Gaillardin C."/>
            <person name="Weissenbach J."/>
            <person name="Wincker P."/>
            <person name="Souciet J.-L."/>
        </authorList>
    </citation>
    <scope>NUCLEOTIDE SEQUENCE [LARGE SCALE GENOMIC DNA]</scope>
    <source>
        <strain>CLIB 122 / E 150</strain>
    </source>
</reference>
<proteinExistence type="inferred from homology"/>
<feature type="chain" id="PRO_0000083380" description="2-(3-amino-3-carboxypropyl)histidine synthase subunit 1">
    <location>
        <begin position="1"/>
        <end position="439"/>
    </location>
</feature>
<feature type="region of interest" description="Disordered" evidence="3">
    <location>
        <begin position="11"/>
        <end position="54"/>
    </location>
</feature>
<feature type="compositionally biased region" description="Polar residues" evidence="3">
    <location>
        <begin position="44"/>
        <end position="54"/>
    </location>
</feature>
<feature type="binding site" evidence="1">
    <location>
        <position position="147"/>
    </location>
    <ligand>
        <name>[4Fe-4S] cluster</name>
        <dbReference type="ChEBI" id="CHEBI:49883"/>
    </ligand>
</feature>
<feature type="binding site" evidence="1">
    <location>
        <position position="251"/>
    </location>
    <ligand>
        <name>[4Fe-4S] cluster</name>
        <dbReference type="ChEBI" id="CHEBI:49883"/>
    </ligand>
</feature>
<feature type="binding site" evidence="1">
    <location>
        <position position="380"/>
    </location>
    <ligand>
        <name>[4Fe-4S] cluster</name>
        <dbReference type="ChEBI" id="CHEBI:49883"/>
    </ligand>
</feature>